<dbReference type="EC" id="2.3.1.225" evidence="5"/>
<dbReference type="EMBL" id="Z46259">
    <property type="protein sequence ID" value="CAA86372.1"/>
    <property type="molecule type" value="Genomic_DNA"/>
</dbReference>
<dbReference type="EMBL" id="Z71602">
    <property type="protein sequence ID" value="CAA96258.1"/>
    <property type="molecule type" value="Genomic_DNA"/>
</dbReference>
<dbReference type="EMBL" id="BK006947">
    <property type="protein sequence ID" value="DAA10237.1"/>
    <property type="molecule type" value="Genomic_DNA"/>
</dbReference>
<dbReference type="PIR" id="S55863">
    <property type="entry name" value="S55863"/>
</dbReference>
<dbReference type="RefSeq" id="NP_014073.1">
    <property type="nucleotide sequence ID" value="NM_001183164.1"/>
</dbReference>
<dbReference type="SMR" id="P42836"/>
<dbReference type="BioGRID" id="35515">
    <property type="interactions" value="13"/>
</dbReference>
<dbReference type="DIP" id="DIP-4833N"/>
<dbReference type="FunCoup" id="P42836">
    <property type="interactions" value="543"/>
</dbReference>
<dbReference type="IntAct" id="P42836">
    <property type="interactions" value="3"/>
</dbReference>
<dbReference type="MINT" id="P42836"/>
<dbReference type="STRING" id="4932.YNL326C"/>
<dbReference type="GlyGen" id="P42836">
    <property type="glycosylation" value="1 site"/>
</dbReference>
<dbReference type="iPTMnet" id="P42836"/>
<dbReference type="PaxDb" id="4932-YNL326C"/>
<dbReference type="PeptideAtlas" id="P42836"/>
<dbReference type="DNASU" id="855390"/>
<dbReference type="EnsemblFungi" id="YNL326C_mRNA">
    <property type="protein sequence ID" value="YNL326C"/>
    <property type="gene ID" value="YNL326C"/>
</dbReference>
<dbReference type="GeneID" id="855390"/>
<dbReference type="KEGG" id="sce:YNL326C"/>
<dbReference type="AGR" id="SGD:S000005270"/>
<dbReference type="SGD" id="S000005270">
    <property type="gene designation" value="PFA3"/>
</dbReference>
<dbReference type="VEuPathDB" id="FungiDB:YNL326C"/>
<dbReference type="eggNOG" id="KOG1315">
    <property type="taxonomic scope" value="Eukaryota"/>
</dbReference>
<dbReference type="HOGENOM" id="CLU_027721_0_0_1"/>
<dbReference type="InParanoid" id="P42836"/>
<dbReference type="OMA" id="YTYFKVI"/>
<dbReference type="OrthoDB" id="302728at2759"/>
<dbReference type="BioCyc" id="YEAST:G3O-33310-MONOMER"/>
<dbReference type="BRENDA" id="2.3.1.225">
    <property type="organism ID" value="984"/>
</dbReference>
<dbReference type="BioGRID-ORCS" id="855390">
    <property type="hits" value="2 hits in 10 CRISPR screens"/>
</dbReference>
<dbReference type="PRO" id="PR:P42836"/>
<dbReference type="Proteomes" id="UP000002311">
    <property type="component" value="Chromosome XIV"/>
</dbReference>
<dbReference type="RNAct" id="P42836">
    <property type="molecule type" value="protein"/>
</dbReference>
<dbReference type="GO" id="GO:0005783">
    <property type="term" value="C:endoplasmic reticulum"/>
    <property type="evidence" value="ECO:0000318"/>
    <property type="project" value="GO_Central"/>
</dbReference>
<dbReference type="GO" id="GO:0000324">
    <property type="term" value="C:fungal-type vacuole"/>
    <property type="evidence" value="ECO:0000314"/>
    <property type="project" value="SGD"/>
</dbReference>
<dbReference type="GO" id="GO:0000329">
    <property type="term" value="C:fungal-type vacuole membrane"/>
    <property type="evidence" value="ECO:0000314"/>
    <property type="project" value="SGD"/>
</dbReference>
<dbReference type="GO" id="GO:0005794">
    <property type="term" value="C:Golgi apparatus"/>
    <property type="evidence" value="ECO:0000318"/>
    <property type="project" value="GO_Central"/>
</dbReference>
<dbReference type="GO" id="GO:0005774">
    <property type="term" value="C:vacuolar membrane"/>
    <property type="evidence" value="ECO:0000314"/>
    <property type="project" value="UniProtKB"/>
</dbReference>
<dbReference type="GO" id="GO:0016409">
    <property type="term" value="F:palmitoyltransferase activity"/>
    <property type="evidence" value="ECO:0000314"/>
    <property type="project" value="UniProtKB"/>
</dbReference>
<dbReference type="GO" id="GO:0019706">
    <property type="term" value="F:protein-cysteine S-palmitoyltransferase activity"/>
    <property type="evidence" value="ECO:0000318"/>
    <property type="project" value="GO_Central"/>
</dbReference>
<dbReference type="GO" id="GO:0018345">
    <property type="term" value="P:protein palmitoylation"/>
    <property type="evidence" value="ECO:0000314"/>
    <property type="project" value="UniProtKB"/>
</dbReference>
<dbReference type="GO" id="GO:0006612">
    <property type="term" value="P:protein targeting to membrane"/>
    <property type="evidence" value="ECO:0000318"/>
    <property type="project" value="GO_Central"/>
</dbReference>
<dbReference type="GO" id="GO:0042144">
    <property type="term" value="P:vacuole fusion, non-autophagic"/>
    <property type="evidence" value="ECO:0000315"/>
    <property type="project" value="SGD"/>
</dbReference>
<dbReference type="InterPro" id="IPR001594">
    <property type="entry name" value="Palmitoyltrfase_DHHC"/>
</dbReference>
<dbReference type="InterPro" id="IPR039859">
    <property type="entry name" value="PFA4/ZDH16/20/ERF2-like"/>
</dbReference>
<dbReference type="PANTHER" id="PTHR12246">
    <property type="entry name" value="PALMITOYLTRANSFERASE ZDHHC16"/>
    <property type="match status" value="1"/>
</dbReference>
<dbReference type="Pfam" id="PF01529">
    <property type="entry name" value="DHHC"/>
    <property type="match status" value="1"/>
</dbReference>
<dbReference type="PROSITE" id="PS50216">
    <property type="entry name" value="DHHC"/>
    <property type="match status" value="1"/>
</dbReference>
<organism>
    <name type="scientific">Saccharomyces cerevisiae (strain ATCC 204508 / S288c)</name>
    <name type="common">Baker's yeast</name>
    <dbReference type="NCBI Taxonomy" id="559292"/>
    <lineage>
        <taxon>Eukaryota</taxon>
        <taxon>Fungi</taxon>
        <taxon>Dikarya</taxon>
        <taxon>Ascomycota</taxon>
        <taxon>Saccharomycotina</taxon>
        <taxon>Saccharomycetes</taxon>
        <taxon>Saccharomycetales</taxon>
        <taxon>Saccharomycetaceae</taxon>
        <taxon>Saccharomyces</taxon>
    </lineage>
</organism>
<proteinExistence type="evidence at protein level"/>
<keyword id="KW-0012">Acyltransferase</keyword>
<keyword id="KW-0449">Lipoprotein</keyword>
<keyword id="KW-0472">Membrane</keyword>
<keyword id="KW-0564">Palmitate</keyword>
<keyword id="KW-1185">Reference proteome</keyword>
<keyword id="KW-0808">Transferase</keyword>
<keyword id="KW-0812">Transmembrane</keyword>
<keyword id="KW-1133">Transmembrane helix</keyword>
<keyword id="KW-0926">Vacuole</keyword>
<feature type="chain" id="PRO_0000212959" description="Palmitoyltransferase PFA3">
    <location>
        <begin position="1"/>
        <end position="336"/>
    </location>
</feature>
<feature type="topological domain" description="Cytoplasmic" evidence="1">
    <location>
        <begin position="1"/>
        <end position="6"/>
    </location>
</feature>
<feature type="transmembrane region" description="Helical" evidence="1">
    <location>
        <begin position="7"/>
        <end position="29"/>
    </location>
</feature>
<feature type="topological domain" description="Vacuolar" evidence="1">
    <location>
        <begin position="30"/>
        <end position="37"/>
    </location>
</feature>
<feature type="transmembrane region" description="Helical" evidence="1">
    <location>
        <begin position="38"/>
        <end position="58"/>
    </location>
</feature>
<feature type="topological domain" description="Cytoplasmic" evidence="1">
    <location>
        <begin position="59"/>
        <end position="147"/>
    </location>
</feature>
<feature type="transmembrane region" description="Helical" evidence="1">
    <location>
        <begin position="148"/>
        <end position="168"/>
    </location>
</feature>
<feature type="topological domain" description="Vacuolar" evidence="1">
    <location>
        <begin position="169"/>
        <end position="188"/>
    </location>
</feature>
<feature type="transmembrane region" description="Helical" evidence="1">
    <location>
        <begin position="189"/>
        <end position="209"/>
    </location>
</feature>
<feature type="topological domain" description="Cytoplasmic" evidence="1">
    <location>
        <begin position="210"/>
        <end position="336"/>
    </location>
</feature>
<feature type="domain" description="DHHC" evidence="2">
    <location>
        <begin position="104"/>
        <end position="154"/>
    </location>
</feature>
<feature type="mutagenesis site" description="Abolishes autopalmitoylation and VAC8 palmitoylation." evidence="5">
    <original>C</original>
    <variation>S</variation>
    <location>
        <position position="134"/>
    </location>
</feature>
<sequence length="336" mass="39184">MNDRLSLTSLFPRCLTTCLYIWTAYITLTRIHQIPRWFLALTIVPTLAVALYTYYKVIARGPGSPLDFPDLLVHDLKAAENGLELPPEYMSKRCLTLKHDGRFRVCQVCHVWKPDRCHHCSSCDVCILKMDHHCPWFAECTGFRNQKFFIQFLMYTTLYAFLVLIYTCYELGTWFNSGSFNRELIDFHLLGVALLAVAVFISVLAFTCFSIYQVCKNQTTIEVHGMRRYRRDLEILNDSYGTNEHLENIFDLGSSMANWQDIMGTSWLEWILPIETFKYKKSKHTKDEKGLYFNVRPQVQDRLLSSRCLEDQLLRRVTPRPSLEADRASVEIIDAN</sequence>
<reference key="1">
    <citation type="journal article" date="1995" name="Yeast">
        <title>Sequencing analysis of a 15.4 kb fragment of yeast chromosome XIV identifies the RPD3, PAS8 and KRE1 loci, five new open reading frames.</title>
        <authorList>
            <person name="Maftahi M."/>
            <person name="Nicaud J.-M."/>
            <person name="Levesque H."/>
            <person name="Gaillardin C."/>
        </authorList>
    </citation>
    <scope>NUCLEOTIDE SEQUENCE [GENOMIC DNA]</scope>
    <source>
        <strain>S288c / FY1676</strain>
    </source>
</reference>
<reference key="2">
    <citation type="journal article" date="1997" name="Nature">
        <title>The nucleotide sequence of Saccharomyces cerevisiae chromosome XIV and its evolutionary implications.</title>
        <authorList>
            <person name="Philippsen P."/>
            <person name="Kleine K."/>
            <person name="Poehlmann R."/>
            <person name="Duesterhoeft A."/>
            <person name="Hamberg K."/>
            <person name="Hegemann J.H."/>
            <person name="Obermaier B."/>
            <person name="Urrestarazu L.A."/>
            <person name="Aert R."/>
            <person name="Albermann K."/>
            <person name="Altmann R."/>
            <person name="Andre B."/>
            <person name="Baladron V."/>
            <person name="Ballesta J.P.G."/>
            <person name="Becam A.-M."/>
            <person name="Beinhauer J.D."/>
            <person name="Boskovic J."/>
            <person name="Buitrago M.J."/>
            <person name="Bussereau F."/>
            <person name="Coster F."/>
            <person name="Crouzet M."/>
            <person name="D'Angelo M."/>
            <person name="Dal Pero F."/>
            <person name="De Antoni A."/>
            <person name="del Rey F."/>
            <person name="Doignon F."/>
            <person name="Domdey H."/>
            <person name="Dubois E."/>
            <person name="Fiedler T.A."/>
            <person name="Fleig U."/>
            <person name="Floeth M."/>
            <person name="Fritz C."/>
            <person name="Gaillardin C."/>
            <person name="Garcia-Cantalejo J.M."/>
            <person name="Glansdorff N."/>
            <person name="Goffeau A."/>
            <person name="Gueldener U."/>
            <person name="Herbert C.J."/>
            <person name="Heumann K."/>
            <person name="Heuss-Neitzel D."/>
            <person name="Hilbert H."/>
            <person name="Hinni K."/>
            <person name="Iraqui Houssaini I."/>
            <person name="Jacquet M."/>
            <person name="Jimenez A."/>
            <person name="Jonniaux J.-L."/>
            <person name="Karpfinger-Hartl L."/>
            <person name="Lanfranchi G."/>
            <person name="Lepingle A."/>
            <person name="Levesque H."/>
            <person name="Lyck R."/>
            <person name="Maftahi M."/>
            <person name="Mallet L."/>
            <person name="Maurer C.T.C."/>
            <person name="Messenguy F."/>
            <person name="Mewes H.-W."/>
            <person name="Moestl D."/>
            <person name="Nasr F."/>
            <person name="Nicaud J.-M."/>
            <person name="Niedenthal R.K."/>
            <person name="Pandolfo D."/>
            <person name="Pierard A."/>
            <person name="Piravandi E."/>
            <person name="Planta R.J."/>
            <person name="Pohl T.M."/>
            <person name="Purnelle B."/>
            <person name="Rebischung C."/>
            <person name="Remacha M.A."/>
            <person name="Revuelta J.L."/>
            <person name="Rinke M."/>
            <person name="Saiz J.E."/>
            <person name="Sartorello F."/>
            <person name="Scherens B."/>
            <person name="Sen-Gupta M."/>
            <person name="Soler-Mira A."/>
            <person name="Urbanus J.H.M."/>
            <person name="Valle G."/>
            <person name="Van Dyck L."/>
            <person name="Verhasselt P."/>
            <person name="Vierendeels F."/>
            <person name="Vissers S."/>
            <person name="Voet M."/>
            <person name="Volckaert G."/>
            <person name="Wach A."/>
            <person name="Wambutt R."/>
            <person name="Wedler H."/>
            <person name="Zollner A."/>
            <person name="Hani J."/>
        </authorList>
    </citation>
    <scope>NUCLEOTIDE SEQUENCE [LARGE SCALE GENOMIC DNA]</scope>
    <source>
        <strain>ATCC 204508 / S288c</strain>
    </source>
</reference>
<reference key="3">
    <citation type="journal article" date="2014" name="G3 (Bethesda)">
        <title>The reference genome sequence of Saccharomyces cerevisiae: Then and now.</title>
        <authorList>
            <person name="Engel S.R."/>
            <person name="Dietrich F.S."/>
            <person name="Fisk D.G."/>
            <person name="Binkley G."/>
            <person name="Balakrishnan R."/>
            <person name="Costanzo M.C."/>
            <person name="Dwight S.S."/>
            <person name="Hitz B.C."/>
            <person name="Karra K."/>
            <person name="Nash R.S."/>
            <person name="Weng S."/>
            <person name="Wong E.D."/>
            <person name="Lloyd P."/>
            <person name="Skrzypek M.S."/>
            <person name="Miyasato S.R."/>
            <person name="Simison M."/>
            <person name="Cherry J.M."/>
        </authorList>
    </citation>
    <scope>GENOME REANNOTATION</scope>
    <source>
        <strain>ATCC 204508 / S288c</strain>
    </source>
</reference>
<reference key="4">
    <citation type="journal article" date="2003" name="Nature">
        <title>Global analysis of protein localization in budding yeast.</title>
        <authorList>
            <person name="Huh W.-K."/>
            <person name="Falvo J.V."/>
            <person name="Gerke L.C."/>
            <person name="Carroll A.S."/>
            <person name="Howson R.W."/>
            <person name="Weissman J.S."/>
            <person name="O'Shea E.K."/>
        </authorList>
    </citation>
    <scope>SUBCELLULAR LOCATION [LARGE SCALE ANALYSIS]</scope>
</reference>
<reference key="5">
    <citation type="journal article" date="2003" name="Nature">
        <title>Global analysis of protein expression in yeast.</title>
        <authorList>
            <person name="Ghaemmaghami S."/>
            <person name="Huh W.-K."/>
            <person name="Bower K."/>
            <person name="Howson R.W."/>
            <person name="Belle A."/>
            <person name="Dephoure N."/>
            <person name="O'Shea E.K."/>
            <person name="Weissman J.S."/>
        </authorList>
    </citation>
    <scope>LEVEL OF PROTEIN EXPRESSION [LARGE SCALE ANALYSIS]</scope>
</reference>
<reference key="6">
    <citation type="journal article" date="2005" name="J. Cell Biol.">
        <title>The vacuolar DHHC-CRD protein Pfa3p is a protein acyltransferase for Vac8p.</title>
        <authorList>
            <person name="Smotrys J.E."/>
            <person name="Schoenfish M.J."/>
            <person name="Stutz M.A."/>
            <person name="Linder M.E."/>
        </authorList>
    </citation>
    <scope>FUNCTION</scope>
    <scope>CATALYTIC ACTIVITY</scope>
    <scope>MUTAGENESIS OF CYS-134</scope>
    <scope>SUBCELLULAR LOCATION</scope>
</reference>
<reference key="7">
    <citation type="journal article" date="2006" name="Proc. Natl. Acad. Sci. U.S.A.">
        <title>A global topology map of the Saccharomyces cerevisiae membrane proteome.</title>
        <authorList>
            <person name="Kim H."/>
            <person name="Melen K."/>
            <person name="Oesterberg M."/>
            <person name="von Heijne G."/>
        </authorList>
    </citation>
    <scope>TOPOLOGY [LARGE SCALE ANALYSIS]</scope>
    <source>
        <strain>ATCC 208353 / W303-1A</strain>
    </source>
</reference>
<protein>
    <recommendedName>
        <fullName>Palmitoyltransferase PFA3</fullName>
        <ecNumber evidence="5">2.3.1.225</ecNumber>
    </recommendedName>
    <alternativeName>
        <fullName>Protein fatty acyltransferase 3</fullName>
    </alternativeName>
</protein>
<comment type="function">
    <text evidence="5">Palmitoyltransferase specific for VAC8. Palmitoylates VAC8 at one or more of its N-terminal cysteine residues, which is required for its proper membrane localization.</text>
</comment>
<comment type="catalytic activity">
    <reaction evidence="5">
        <text>L-cysteinyl-[protein] + hexadecanoyl-CoA = S-hexadecanoyl-L-cysteinyl-[protein] + CoA</text>
        <dbReference type="Rhea" id="RHEA:36683"/>
        <dbReference type="Rhea" id="RHEA-COMP:10131"/>
        <dbReference type="Rhea" id="RHEA-COMP:11032"/>
        <dbReference type="ChEBI" id="CHEBI:29950"/>
        <dbReference type="ChEBI" id="CHEBI:57287"/>
        <dbReference type="ChEBI" id="CHEBI:57379"/>
        <dbReference type="ChEBI" id="CHEBI:74151"/>
        <dbReference type="EC" id="2.3.1.225"/>
    </reaction>
</comment>
<comment type="subcellular location">
    <subcellularLocation>
        <location evidence="3 5">Vacuole membrane</location>
        <topology evidence="3 5">Multi-pass membrane protein</topology>
    </subcellularLocation>
</comment>
<comment type="domain">
    <text>The DHHC domain is required for palmitoyltransferase activity.</text>
</comment>
<comment type="PTM">
    <text evidence="5">Autopalmitoylated.</text>
</comment>
<comment type="miscellaneous">
    <text evidence="4">Present with 2133 molecules/cell in log phase SD medium.</text>
</comment>
<comment type="similarity">
    <text evidence="6">Belongs to the DHHC palmitoyltransferase family. PFA3 subfamily.</text>
</comment>
<evidence type="ECO:0000255" key="1"/>
<evidence type="ECO:0000255" key="2">
    <source>
        <dbReference type="PROSITE-ProRule" id="PRU00067"/>
    </source>
</evidence>
<evidence type="ECO:0000269" key="3">
    <source>
    </source>
</evidence>
<evidence type="ECO:0000269" key="4">
    <source>
    </source>
</evidence>
<evidence type="ECO:0000269" key="5">
    <source>
    </source>
</evidence>
<evidence type="ECO:0000305" key="6"/>
<accession>P42836</accession>
<accession>D6W0M1</accession>
<name>PFA3_YEAST</name>
<gene>
    <name type="primary">PFA3</name>
    <name type="ordered locus">YNL326C</name>
    <name type="ORF">N0325</name>
</gene>